<protein>
    <recommendedName>
        <fullName>RBAK downstream neighbor protein</fullName>
    </recommendedName>
</protein>
<accession>A6NC62</accession>
<accession>Q8N0T3</accession>
<feature type="signal peptide" evidence="1">
    <location>
        <begin position="1"/>
        <end position="22"/>
    </location>
</feature>
<feature type="chain" id="PRO_0000462570" description="RBAK downstream neighbor protein" evidence="1">
    <location>
        <begin position="23"/>
        <end position="81"/>
    </location>
</feature>
<sequence>MWPPLLLLLLLLPAAPVPTAKAAPHPDANTQEGLQNLLQGVGAGGDGELRADSHLAPGSGCIDGAVVATRPESRGGRPAVP</sequence>
<evidence type="ECO:0000255" key="1"/>
<evidence type="ECO:0000305" key="2"/>
<keyword id="KW-1185">Reference proteome</keyword>
<keyword id="KW-0964">Secreted</keyword>
<keyword id="KW-0732">Signal</keyword>
<reference key="1">
    <citation type="journal article" date="2003" name="Nature">
        <title>The DNA sequence of human chromosome 7.</title>
        <authorList>
            <person name="Hillier L.W."/>
            <person name="Fulton R.S."/>
            <person name="Fulton L.A."/>
            <person name="Graves T.A."/>
            <person name="Pepin K.H."/>
            <person name="Wagner-McPherson C."/>
            <person name="Layman D."/>
            <person name="Maas J."/>
            <person name="Jaeger S."/>
            <person name="Walker R."/>
            <person name="Wylie K."/>
            <person name="Sekhon M."/>
            <person name="Becker M.C."/>
            <person name="O'Laughlin M.D."/>
            <person name="Schaller M.E."/>
            <person name="Fewell G.A."/>
            <person name="Delehaunty K.D."/>
            <person name="Miner T.L."/>
            <person name="Nash W.E."/>
            <person name="Cordes M."/>
            <person name="Du H."/>
            <person name="Sun H."/>
            <person name="Edwards J."/>
            <person name="Bradshaw-Cordum H."/>
            <person name="Ali J."/>
            <person name="Andrews S."/>
            <person name="Isak A."/>
            <person name="Vanbrunt A."/>
            <person name="Nguyen C."/>
            <person name="Du F."/>
            <person name="Lamar B."/>
            <person name="Courtney L."/>
            <person name="Kalicki J."/>
            <person name="Ozersky P."/>
            <person name="Bielicki L."/>
            <person name="Scott K."/>
            <person name="Holmes A."/>
            <person name="Harkins R."/>
            <person name="Harris A."/>
            <person name="Strong C.M."/>
            <person name="Hou S."/>
            <person name="Tomlinson C."/>
            <person name="Dauphin-Kohlberg S."/>
            <person name="Kozlowicz-Reilly A."/>
            <person name="Leonard S."/>
            <person name="Rohlfing T."/>
            <person name="Rock S.M."/>
            <person name="Tin-Wollam A.-M."/>
            <person name="Abbott A."/>
            <person name="Minx P."/>
            <person name="Maupin R."/>
            <person name="Strowmatt C."/>
            <person name="Latreille P."/>
            <person name="Miller N."/>
            <person name="Johnson D."/>
            <person name="Murray J."/>
            <person name="Woessner J.P."/>
            <person name="Wendl M.C."/>
            <person name="Yang S.-P."/>
            <person name="Schultz B.R."/>
            <person name="Wallis J.W."/>
            <person name="Spieth J."/>
            <person name="Bieri T.A."/>
            <person name="Nelson J.O."/>
            <person name="Berkowicz N."/>
            <person name="Wohldmann P.E."/>
            <person name="Cook L.L."/>
            <person name="Hickenbotham M.T."/>
            <person name="Eldred J."/>
            <person name="Williams D."/>
            <person name="Bedell J.A."/>
            <person name="Mardis E.R."/>
            <person name="Clifton S.W."/>
            <person name="Chissoe S.L."/>
            <person name="Marra M.A."/>
            <person name="Raymond C."/>
            <person name="Haugen E."/>
            <person name="Gillett W."/>
            <person name="Zhou Y."/>
            <person name="James R."/>
            <person name="Phelps K."/>
            <person name="Iadanoto S."/>
            <person name="Bubb K."/>
            <person name="Simms E."/>
            <person name="Levy R."/>
            <person name="Clendenning J."/>
            <person name="Kaul R."/>
            <person name="Kent W.J."/>
            <person name="Furey T.S."/>
            <person name="Baertsch R.A."/>
            <person name="Brent M.R."/>
            <person name="Keibler E."/>
            <person name="Flicek P."/>
            <person name="Bork P."/>
            <person name="Suyama M."/>
            <person name="Bailey J.A."/>
            <person name="Portnoy M.E."/>
            <person name="Torrents D."/>
            <person name="Chinwalla A.T."/>
            <person name="Gish W.R."/>
            <person name="Eddy S.R."/>
            <person name="McPherson J.D."/>
            <person name="Olson M.V."/>
            <person name="Eichler E.E."/>
            <person name="Green E.D."/>
            <person name="Waterston R.H."/>
            <person name="Wilson R.K."/>
        </authorList>
    </citation>
    <scope>NUCLEOTIDE SEQUENCE [LARGE SCALE GENOMIC DNA]</scope>
</reference>
<reference key="2">
    <citation type="submission" date="2005-07" db="EMBL/GenBank/DDBJ databases">
        <authorList>
            <person name="Mural R.J."/>
            <person name="Istrail S."/>
            <person name="Sutton G.G."/>
            <person name="Florea L."/>
            <person name="Halpern A.L."/>
            <person name="Mobarry C.M."/>
            <person name="Lippert R."/>
            <person name="Walenz B."/>
            <person name="Shatkay H."/>
            <person name="Dew I."/>
            <person name="Miller J.R."/>
            <person name="Flanigan M.J."/>
            <person name="Edwards N.J."/>
            <person name="Bolanos R."/>
            <person name="Fasulo D."/>
            <person name="Halldorsson B.V."/>
            <person name="Hannenhalli S."/>
            <person name="Turner R."/>
            <person name="Yooseph S."/>
            <person name="Lu F."/>
            <person name="Nusskern D.R."/>
            <person name="Shue B.C."/>
            <person name="Zheng X.H."/>
            <person name="Zhong F."/>
            <person name="Delcher A.L."/>
            <person name="Huson D.H."/>
            <person name="Kravitz S.A."/>
            <person name="Mouchard L."/>
            <person name="Reinert K."/>
            <person name="Remington K.A."/>
            <person name="Clark A.G."/>
            <person name="Waterman M.S."/>
            <person name="Eichler E.E."/>
            <person name="Adams M.D."/>
            <person name="Hunkapiller M.W."/>
            <person name="Myers E.W."/>
            <person name="Venter J.C."/>
        </authorList>
    </citation>
    <scope>NUCLEOTIDE SEQUENCE [LARGE SCALE GENOMIC DNA]</scope>
</reference>
<proteinExistence type="inferred from homology"/>
<name>RAKDN_HUMAN</name>
<dbReference type="EMBL" id="AL356379">
    <property type="status" value="NOT_ANNOTATED_CDS"/>
    <property type="molecule type" value="Genomic_DNA"/>
</dbReference>
<dbReference type="EMBL" id="CH471144">
    <property type="protein sequence ID" value="EAW87319.1"/>
    <property type="status" value="ALT_SEQ"/>
    <property type="molecule type" value="Genomic_DNA"/>
</dbReference>
<dbReference type="BioMuta" id="HGNC:33770"/>
<dbReference type="PeptideAtlas" id="A6NC62"/>
<dbReference type="AGR" id="HGNC:33770"/>
<dbReference type="GeneCards" id="RBAKDN"/>
<dbReference type="HGNC" id="HGNC:33770">
    <property type="gene designation" value="RBAKDN"/>
</dbReference>
<dbReference type="neXtProt" id="NX_A6NC62"/>
<dbReference type="InParanoid" id="A6NC62"/>
<dbReference type="PAN-GO" id="A6NC62">
    <property type="GO annotations" value="0 GO annotations based on evolutionary models"/>
</dbReference>
<dbReference type="Pharos" id="A6NC62">
    <property type="development level" value="Tdark"/>
</dbReference>
<dbReference type="Proteomes" id="UP000005640">
    <property type="component" value="Unplaced"/>
</dbReference>
<dbReference type="RNAct" id="A6NC62">
    <property type="molecule type" value="protein"/>
</dbReference>
<organism>
    <name type="scientific">Homo sapiens</name>
    <name type="common">Human</name>
    <dbReference type="NCBI Taxonomy" id="9606"/>
    <lineage>
        <taxon>Eukaryota</taxon>
        <taxon>Metazoa</taxon>
        <taxon>Chordata</taxon>
        <taxon>Craniata</taxon>
        <taxon>Vertebrata</taxon>
        <taxon>Euteleostomi</taxon>
        <taxon>Mammalia</taxon>
        <taxon>Eutheria</taxon>
        <taxon>Euarchontoglires</taxon>
        <taxon>Primates</taxon>
        <taxon>Haplorrhini</taxon>
        <taxon>Catarrhini</taxon>
        <taxon>Hominidae</taxon>
        <taxon>Homo</taxon>
    </lineage>
</organism>
<gene>
    <name type="primary">RBAKDN</name>
</gene>
<comment type="subcellular location">
    <subcellularLocation>
        <location evidence="2">Secreted</location>
    </subcellularLocation>
</comment>
<comment type="sequence caution" evidence="2">
    <conflict type="erroneous gene model prediction">
        <sequence resource="EMBL-CDS" id="EAW87319"/>
    </conflict>
</comment>